<feature type="chain" id="PRO_0000391968" description="Ubiquitin-fold modifier-conjugating enzyme 1">
    <location>
        <begin position="1"/>
        <end position="164"/>
    </location>
</feature>
<feature type="active site" description="Glycyl thioester intermediate" evidence="1">
    <location>
        <position position="116"/>
    </location>
</feature>
<accession>B3NPZ0</accession>
<gene>
    <name type="ORF">GG22310</name>
</gene>
<name>UFC1_DROER</name>
<reference key="1">
    <citation type="journal article" date="2007" name="Nature">
        <title>Evolution of genes and genomes on the Drosophila phylogeny.</title>
        <authorList>
            <consortium name="Drosophila 12 genomes consortium"/>
        </authorList>
    </citation>
    <scope>NUCLEOTIDE SEQUENCE [LARGE SCALE GENOMIC DNA]</scope>
    <source>
        <strain>Tucson 14021-0224.01</strain>
    </source>
</reference>
<proteinExistence type="inferred from homology"/>
<dbReference type="EMBL" id="CH954179">
    <property type="protein sequence ID" value="EDV55837.1"/>
    <property type="molecule type" value="Genomic_DNA"/>
</dbReference>
<dbReference type="SMR" id="B3NPZ0"/>
<dbReference type="EnsemblMetazoa" id="FBtr0142364">
    <property type="protein sequence ID" value="FBpp0140856"/>
    <property type="gene ID" value="FBgn0114482"/>
</dbReference>
<dbReference type="EnsemblMetazoa" id="XM_001975401.3">
    <property type="protein sequence ID" value="XP_001975437.1"/>
    <property type="gene ID" value="LOC6548752"/>
</dbReference>
<dbReference type="GeneID" id="6548752"/>
<dbReference type="KEGG" id="der:6548752"/>
<dbReference type="CTD" id="51506"/>
<dbReference type="eggNOG" id="KOG3357">
    <property type="taxonomic scope" value="Eukaryota"/>
</dbReference>
<dbReference type="HOGENOM" id="CLU_101170_0_0_1"/>
<dbReference type="OMA" id="LWQKNVP"/>
<dbReference type="OrthoDB" id="10256182at2759"/>
<dbReference type="PhylomeDB" id="B3NPZ0"/>
<dbReference type="Proteomes" id="UP000008711">
    <property type="component" value="Unassembled WGS sequence"/>
</dbReference>
<dbReference type="GO" id="GO:0005737">
    <property type="term" value="C:cytoplasm"/>
    <property type="evidence" value="ECO:0007669"/>
    <property type="project" value="TreeGrafter"/>
</dbReference>
<dbReference type="GO" id="GO:0061657">
    <property type="term" value="F:UFM1 conjugating enzyme activity"/>
    <property type="evidence" value="ECO:0007669"/>
    <property type="project" value="InterPro"/>
</dbReference>
<dbReference type="GO" id="GO:1990592">
    <property type="term" value="P:protein K69-linked ufmylation"/>
    <property type="evidence" value="ECO:0007669"/>
    <property type="project" value="TreeGrafter"/>
</dbReference>
<dbReference type="CDD" id="cd11686">
    <property type="entry name" value="UBCc_UFC1"/>
    <property type="match status" value="1"/>
</dbReference>
<dbReference type="FunFam" id="3.10.110.10:FF:000042">
    <property type="entry name" value="Ubiquitin-fold modifier-conjugating enzyme 1"/>
    <property type="match status" value="1"/>
</dbReference>
<dbReference type="Gene3D" id="3.10.110.10">
    <property type="entry name" value="Ubiquitin Conjugating Enzyme"/>
    <property type="match status" value="1"/>
</dbReference>
<dbReference type="InterPro" id="IPR016135">
    <property type="entry name" value="UBQ-conjugating_enzyme/RWD"/>
</dbReference>
<dbReference type="InterPro" id="IPR014806">
    <property type="entry name" value="Ufc1"/>
</dbReference>
<dbReference type="PANTHER" id="PTHR12921">
    <property type="entry name" value="UBIQUITIN-FOLD MODIFIER-CONJUGATING ENZYME 1"/>
    <property type="match status" value="1"/>
</dbReference>
<dbReference type="PANTHER" id="PTHR12921:SF0">
    <property type="entry name" value="UBIQUITIN-FOLD MODIFIER-CONJUGATING ENZYME 1"/>
    <property type="match status" value="1"/>
</dbReference>
<dbReference type="Pfam" id="PF08694">
    <property type="entry name" value="UFC1"/>
    <property type="match status" value="1"/>
</dbReference>
<dbReference type="PIRSF" id="PIRSF008716">
    <property type="entry name" value="DUF1782"/>
    <property type="match status" value="1"/>
</dbReference>
<dbReference type="SUPFAM" id="SSF54495">
    <property type="entry name" value="UBC-like"/>
    <property type="match status" value="1"/>
</dbReference>
<comment type="function">
    <text evidence="1">E2-like enzyme which forms an intermediate with UFM1 via a thioester linkage.</text>
</comment>
<comment type="similarity">
    <text evidence="2">Belongs to the ubiquitin-conjugating enzyme family. UFC1 subfamily.</text>
</comment>
<protein>
    <recommendedName>
        <fullName>Ubiquitin-fold modifier-conjugating enzyme 1</fullName>
    </recommendedName>
    <alternativeName>
        <fullName>Ufm1-conjugating enzyme 1</fullName>
    </alternativeName>
</protein>
<evidence type="ECO:0000250" key="1"/>
<evidence type="ECO:0000305" key="2"/>
<organism>
    <name type="scientific">Drosophila erecta</name>
    <name type="common">Fruit fly</name>
    <dbReference type="NCBI Taxonomy" id="7220"/>
    <lineage>
        <taxon>Eukaryota</taxon>
        <taxon>Metazoa</taxon>
        <taxon>Ecdysozoa</taxon>
        <taxon>Arthropoda</taxon>
        <taxon>Hexapoda</taxon>
        <taxon>Insecta</taxon>
        <taxon>Pterygota</taxon>
        <taxon>Neoptera</taxon>
        <taxon>Endopterygota</taxon>
        <taxon>Diptera</taxon>
        <taxon>Brachycera</taxon>
        <taxon>Muscomorpha</taxon>
        <taxon>Ephydroidea</taxon>
        <taxon>Drosophilidae</taxon>
        <taxon>Drosophila</taxon>
        <taxon>Sophophora</taxon>
    </lineage>
</organism>
<keyword id="KW-0833">Ubl conjugation pathway</keyword>
<sequence length="164" mass="19004">MVDDSTRKTLSNIPLLQIRAGPREKDVWVQRLKEEYQALIKYVENNKQSGSDWFRLESNKEGTKWFGKCWYMHNLLKYEFDVEFDIPVTYPTTAPEIALPELDGKTAKMYRGGKICLTDHFKPLWARNVPKFGIAHAMALGLAPWLAVEIPDLIEKGIITYKEK</sequence>